<proteinExistence type="inferred from homology"/>
<gene>
    <name evidence="1" type="primary">gpmA</name>
    <name type="ordered locus">Gbem_3501</name>
</gene>
<comment type="function">
    <text evidence="1">Catalyzes the interconversion of 2-phosphoglycerate and 3-phosphoglycerate.</text>
</comment>
<comment type="catalytic activity">
    <reaction evidence="1">
        <text>(2R)-2-phosphoglycerate = (2R)-3-phosphoglycerate</text>
        <dbReference type="Rhea" id="RHEA:15901"/>
        <dbReference type="ChEBI" id="CHEBI:58272"/>
        <dbReference type="ChEBI" id="CHEBI:58289"/>
        <dbReference type="EC" id="5.4.2.11"/>
    </reaction>
</comment>
<comment type="pathway">
    <text evidence="1">Carbohydrate degradation; glycolysis; pyruvate from D-glyceraldehyde 3-phosphate: step 3/5.</text>
</comment>
<comment type="subunit">
    <text evidence="1">Homodimer.</text>
</comment>
<comment type="similarity">
    <text evidence="1">Belongs to the phosphoglycerate mutase family. BPG-dependent PGAM subfamily.</text>
</comment>
<feature type="chain" id="PRO_1000135954" description="2,3-bisphosphoglycerate-dependent phosphoglycerate mutase">
    <location>
        <begin position="1"/>
        <end position="234"/>
    </location>
</feature>
<feature type="active site" description="Tele-phosphohistidine intermediate" evidence="1">
    <location>
        <position position="9"/>
    </location>
</feature>
<feature type="active site" description="Proton donor/acceptor" evidence="1">
    <location>
        <position position="87"/>
    </location>
</feature>
<feature type="binding site" evidence="1">
    <location>
        <begin position="8"/>
        <end position="15"/>
    </location>
    <ligand>
        <name>substrate</name>
    </ligand>
</feature>
<feature type="binding site" evidence="1">
    <location>
        <begin position="21"/>
        <end position="22"/>
    </location>
    <ligand>
        <name>substrate</name>
    </ligand>
</feature>
<feature type="binding site" evidence="1">
    <location>
        <position position="60"/>
    </location>
    <ligand>
        <name>substrate</name>
    </ligand>
</feature>
<feature type="binding site" evidence="1">
    <location>
        <begin position="87"/>
        <end position="90"/>
    </location>
    <ligand>
        <name>substrate</name>
    </ligand>
</feature>
<feature type="binding site" evidence="1">
    <location>
        <position position="98"/>
    </location>
    <ligand>
        <name>substrate</name>
    </ligand>
</feature>
<feature type="binding site" evidence="1">
    <location>
        <begin position="114"/>
        <end position="115"/>
    </location>
    <ligand>
        <name>substrate</name>
    </ligand>
</feature>
<feature type="binding site" evidence="1">
    <location>
        <begin position="183"/>
        <end position="184"/>
    </location>
    <ligand>
        <name>substrate</name>
    </ligand>
</feature>
<feature type="site" description="Transition state stabilizer" evidence="1">
    <location>
        <position position="182"/>
    </location>
</feature>
<accession>B5EC38</accession>
<name>GPMA_CITBB</name>
<organism>
    <name type="scientific">Citrifermentans bemidjiense (strain ATCC BAA-1014 / DSM 16622 / JCM 12645 / Bem)</name>
    <name type="common">Geobacter bemidjiensis</name>
    <dbReference type="NCBI Taxonomy" id="404380"/>
    <lineage>
        <taxon>Bacteria</taxon>
        <taxon>Pseudomonadati</taxon>
        <taxon>Thermodesulfobacteriota</taxon>
        <taxon>Desulfuromonadia</taxon>
        <taxon>Geobacterales</taxon>
        <taxon>Geobacteraceae</taxon>
        <taxon>Citrifermentans</taxon>
    </lineage>
</organism>
<sequence>MHQLVLLRHGESVWNKENLFTGWTDVELSPRGEEESRNAGLLLKEHGFVFDLAFTSLLKRAIKTLWIVLEQMDLMWIPEHKEWRLNERHYGALQGLNKAQTAQEYGDEQVKLWRRSYKVRPPALAEGDQRHPSFDPRYHSLSRDLLPDTECLQDTVERVLPFWQQQAVPALQQGKRILIAAHGNSLRGLIKYLDQIPDDDIVGLEIPTGSPLVYELDRDLKPVRRYYLETGKAG</sequence>
<reference key="1">
    <citation type="submission" date="2008-07" db="EMBL/GenBank/DDBJ databases">
        <title>Complete sequence of Geobacter bemidjiensis BEM.</title>
        <authorList>
            <consortium name="US DOE Joint Genome Institute"/>
            <person name="Lucas S."/>
            <person name="Copeland A."/>
            <person name="Lapidus A."/>
            <person name="Glavina del Rio T."/>
            <person name="Dalin E."/>
            <person name="Tice H."/>
            <person name="Bruce D."/>
            <person name="Goodwin L."/>
            <person name="Pitluck S."/>
            <person name="Kiss H."/>
            <person name="Brettin T."/>
            <person name="Detter J.C."/>
            <person name="Han C."/>
            <person name="Kuske C.R."/>
            <person name="Schmutz J."/>
            <person name="Larimer F."/>
            <person name="Land M."/>
            <person name="Hauser L."/>
            <person name="Kyrpides N."/>
            <person name="Lykidis A."/>
            <person name="Lovley D."/>
            <person name="Richardson P."/>
        </authorList>
    </citation>
    <scope>NUCLEOTIDE SEQUENCE [LARGE SCALE GENOMIC DNA]</scope>
    <source>
        <strain>ATCC BAA-1014 / DSM 16622 / JCM 12645 / Bem</strain>
    </source>
</reference>
<keyword id="KW-0312">Gluconeogenesis</keyword>
<keyword id="KW-0324">Glycolysis</keyword>
<keyword id="KW-0413">Isomerase</keyword>
<keyword id="KW-1185">Reference proteome</keyword>
<evidence type="ECO:0000255" key="1">
    <source>
        <dbReference type="HAMAP-Rule" id="MF_01039"/>
    </source>
</evidence>
<dbReference type="EC" id="5.4.2.11" evidence="1"/>
<dbReference type="EMBL" id="CP001124">
    <property type="protein sequence ID" value="ACH40494.1"/>
    <property type="molecule type" value="Genomic_DNA"/>
</dbReference>
<dbReference type="RefSeq" id="WP_012531930.1">
    <property type="nucleotide sequence ID" value="NC_011146.1"/>
</dbReference>
<dbReference type="SMR" id="B5EC38"/>
<dbReference type="STRING" id="404380.Gbem_3501"/>
<dbReference type="KEGG" id="gbm:Gbem_3501"/>
<dbReference type="eggNOG" id="COG0588">
    <property type="taxonomic scope" value="Bacteria"/>
</dbReference>
<dbReference type="HOGENOM" id="CLU_033323_1_1_7"/>
<dbReference type="OrthoDB" id="9781415at2"/>
<dbReference type="UniPathway" id="UPA00109">
    <property type="reaction ID" value="UER00186"/>
</dbReference>
<dbReference type="Proteomes" id="UP000008825">
    <property type="component" value="Chromosome"/>
</dbReference>
<dbReference type="GO" id="GO:0004619">
    <property type="term" value="F:phosphoglycerate mutase activity"/>
    <property type="evidence" value="ECO:0007669"/>
    <property type="project" value="UniProtKB-EC"/>
</dbReference>
<dbReference type="GO" id="GO:0006094">
    <property type="term" value="P:gluconeogenesis"/>
    <property type="evidence" value="ECO:0007669"/>
    <property type="project" value="UniProtKB-UniRule"/>
</dbReference>
<dbReference type="GO" id="GO:0006096">
    <property type="term" value="P:glycolytic process"/>
    <property type="evidence" value="ECO:0007669"/>
    <property type="project" value="UniProtKB-UniRule"/>
</dbReference>
<dbReference type="CDD" id="cd07067">
    <property type="entry name" value="HP_PGM_like"/>
    <property type="match status" value="1"/>
</dbReference>
<dbReference type="FunFam" id="3.40.50.1240:FF:000003">
    <property type="entry name" value="2,3-bisphosphoglycerate-dependent phosphoglycerate mutase"/>
    <property type="match status" value="1"/>
</dbReference>
<dbReference type="Gene3D" id="3.40.50.1240">
    <property type="entry name" value="Phosphoglycerate mutase-like"/>
    <property type="match status" value="1"/>
</dbReference>
<dbReference type="HAMAP" id="MF_01039">
    <property type="entry name" value="PGAM_GpmA"/>
    <property type="match status" value="1"/>
</dbReference>
<dbReference type="InterPro" id="IPR013078">
    <property type="entry name" value="His_Pase_superF_clade-1"/>
</dbReference>
<dbReference type="InterPro" id="IPR029033">
    <property type="entry name" value="His_PPase_superfam"/>
</dbReference>
<dbReference type="InterPro" id="IPR001345">
    <property type="entry name" value="PG/BPGM_mutase_AS"/>
</dbReference>
<dbReference type="InterPro" id="IPR005952">
    <property type="entry name" value="Phosphogly_mut1"/>
</dbReference>
<dbReference type="NCBIfam" id="TIGR01258">
    <property type="entry name" value="pgm_1"/>
    <property type="match status" value="1"/>
</dbReference>
<dbReference type="NCBIfam" id="NF010713">
    <property type="entry name" value="PRK14115.1"/>
    <property type="match status" value="1"/>
</dbReference>
<dbReference type="PANTHER" id="PTHR11931">
    <property type="entry name" value="PHOSPHOGLYCERATE MUTASE"/>
    <property type="match status" value="1"/>
</dbReference>
<dbReference type="Pfam" id="PF00300">
    <property type="entry name" value="His_Phos_1"/>
    <property type="match status" value="2"/>
</dbReference>
<dbReference type="PIRSF" id="PIRSF000709">
    <property type="entry name" value="6PFK_2-Ptase"/>
    <property type="match status" value="1"/>
</dbReference>
<dbReference type="SMART" id="SM00855">
    <property type="entry name" value="PGAM"/>
    <property type="match status" value="1"/>
</dbReference>
<dbReference type="SUPFAM" id="SSF53254">
    <property type="entry name" value="Phosphoglycerate mutase-like"/>
    <property type="match status" value="1"/>
</dbReference>
<dbReference type="PROSITE" id="PS00175">
    <property type="entry name" value="PG_MUTASE"/>
    <property type="match status" value="1"/>
</dbReference>
<protein>
    <recommendedName>
        <fullName evidence="1">2,3-bisphosphoglycerate-dependent phosphoglycerate mutase</fullName>
        <shortName evidence="1">BPG-dependent PGAM</shortName>
        <shortName evidence="1">PGAM</shortName>
        <shortName evidence="1">Phosphoglyceromutase</shortName>
        <shortName evidence="1">dPGM</shortName>
        <ecNumber evidence="1">5.4.2.11</ecNumber>
    </recommendedName>
</protein>